<reference key="1">
    <citation type="journal article" date="2002" name="Proc. Natl. Acad. Sci. U.S.A.">
        <title>Genome sequence of a serotype M3 strain of group A Streptococcus: phage-encoded toxins, the high-virulence phenotype, and clone emergence.</title>
        <authorList>
            <person name="Beres S.B."/>
            <person name="Sylva G.L."/>
            <person name="Barbian K.D."/>
            <person name="Lei B."/>
            <person name="Hoff J.S."/>
            <person name="Mammarella N.D."/>
            <person name="Liu M.-Y."/>
            <person name="Smoot J.C."/>
            <person name="Porcella S.F."/>
            <person name="Parkins L.D."/>
            <person name="Campbell D.S."/>
            <person name="Smith T.M."/>
            <person name="McCormick J.K."/>
            <person name="Leung D.Y.M."/>
            <person name="Schlievert P.M."/>
            <person name="Musser J.M."/>
        </authorList>
    </citation>
    <scope>NUCLEOTIDE SEQUENCE [LARGE SCALE GENOMIC DNA]</scope>
    <source>
        <strain>ATCC BAA-595 / MGAS315</strain>
    </source>
</reference>
<organism>
    <name type="scientific">Streptococcus pyogenes serotype M3 (strain ATCC BAA-595 / MGAS315)</name>
    <dbReference type="NCBI Taxonomy" id="198466"/>
    <lineage>
        <taxon>Bacteria</taxon>
        <taxon>Bacillati</taxon>
        <taxon>Bacillota</taxon>
        <taxon>Bacilli</taxon>
        <taxon>Lactobacillales</taxon>
        <taxon>Streptococcaceae</taxon>
        <taxon>Streptococcus</taxon>
    </lineage>
</organism>
<gene>
    <name evidence="1" type="primary">glmU</name>
    <name type="ordered locus">SpyM3_0312</name>
</gene>
<keyword id="KW-0012">Acyltransferase</keyword>
<keyword id="KW-0133">Cell shape</keyword>
<keyword id="KW-0961">Cell wall biogenesis/degradation</keyword>
<keyword id="KW-0963">Cytoplasm</keyword>
<keyword id="KW-0460">Magnesium</keyword>
<keyword id="KW-0479">Metal-binding</keyword>
<keyword id="KW-0511">Multifunctional enzyme</keyword>
<keyword id="KW-0548">Nucleotidyltransferase</keyword>
<keyword id="KW-0573">Peptidoglycan synthesis</keyword>
<keyword id="KW-0677">Repeat</keyword>
<keyword id="KW-0808">Transferase</keyword>
<accession>P0DB62</accession>
<accession>Q79WE9</accession>
<accession>Q8K8F5</accession>
<evidence type="ECO:0000255" key="1">
    <source>
        <dbReference type="HAMAP-Rule" id="MF_01631"/>
    </source>
</evidence>
<feature type="chain" id="PRO_0000233855" description="Bifunctional protein GlmU">
    <location>
        <begin position="1"/>
        <end position="460"/>
    </location>
</feature>
<feature type="region of interest" description="Pyrophosphorylase" evidence="1">
    <location>
        <begin position="1"/>
        <end position="229"/>
    </location>
</feature>
<feature type="region of interest" description="Linker" evidence="1">
    <location>
        <begin position="230"/>
        <end position="250"/>
    </location>
</feature>
<feature type="region of interest" description="N-acetyltransferase" evidence="1">
    <location>
        <begin position="251"/>
        <end position="460"/>
    </location>
</feature>
<feature type="active site" description="Proton acceptor" evidence="1">
    <location>
        <position position="362"/>
    </location>
</feature>
<feature type="binding site" evidence="1">
    <location>
        <begin position="8"/>
        <end position="11"/>
    </location>
    <ligand>
        <name>UDP-N-acetyl-alpha-D-glucosamine</name>
        <dbReference type="ChEBI" id="CHEBI:57705"/>
    </ligand>
</feature>
<feature type="binding site" evidence="1">
    <location>
        <position position="22"/>
    </location>
    <ligand>
        <name>UDP-N-acetyl-alpha-D-glucosamine</name>
        <dbReference type="ChEBI" id="CHEBI:57705"/>
    </ligand>
</feature>
<feature type="binding site" evidence="1">
    <location>
        <position position="72"/>
    </location>
    <ligand>
        <name>UDP-N-acetyl-alpha-D-glucosamine</name>
        <dbReference type="ChEBI" id="CHEBI:57705"/>
    </ligand>
</feature>
<feature type="binding site" evidence="1">
    <location>
        <begin position="77"/>
        <end position="78"/>
    </location>
    <ligand>
        <name>UDP-N-acetyl-alpha-D-glucosamine</name>
        <dbReference type="ChEBI" id="CHEBI:57705"/>
    </ligand>
</feature>
<feature type="binding site" evidence="1">
    <location>
        <position position="102"/>
    </location>
    <ligand>
        <name>Mg(2+)</name>
        <dbReference type="ChEBI" id="CHEBI:18420"/>
    </ligand>
</feature>
<feature type="binding site" evidence="1">
    <location>
        <position position="139"/>
    </location>
    <ligand>
        <name>UDP-N-acetyl-alpha-D-glucosamine</name>
        <dbReference type="ChEBI" id="CHEBI:57705"/>
    </ligand>
</feature>
<feature type="binding site" evidence="1">
    <location>
        <position position="154"/>
    </location>
    <ligand>
        <name>UDP-N-acetyl-alpha-D-glucosamine</name>
        <dbReference type="ChEBI" id="CHEBI:57705"/>
    </ligand>
</feature>
<feature type="binding site" evidence="1">
    <location>
        <position position="169"/>
    </location>
    <ligand>
        <name>UDP-N-acetyl-alpha-D-glucosamine</name>
        <dbReference type="ChEBI" id="CHEBI:57705"/>
    </ligand>
</feature>
<feature type="binding site" evidence="1">
    <location>
        <position position="227"/>
    </location>
    <ligand>
        <name>Mg(2+)</name>
        <dbReference type="ChEBI" id="CHEBI:18420"/>
    </ligand>
</feature>
<feature type="binding site" evidence="1">
    <location>
        <position position="227"/>
    </location>
    <ligand>
        <name>UDP-N-acetyl-alpha-D-glucosamine</name>
        <dbReference type="ChEBI" id="CHEBI:57705"/>
    </ligand>
</feature>
<feature type="binding site" evidence="1">
    <location>
        <position position="332"/>
    </location>
    <ligand>
        <name>UDP-N-acetyl-alpha-D-glucosamine</name>
        <dbReference type="ChEBI" id="CHEBI:57705"/>
    </ligand>
</feature>
<feature type="binding site" evidence="1">
    <location>
        <position position="350"/>
    </location>
    <ligand>
        <name>UDP-N-acetyl-alpha-D-glucosamine</name>
        <dbReference type="ChEBI" id="CHEBI:57705"/>
    </ligand>
</feature>
<feature type="binding site" evidence="1">
    <location>
        <position position="365"/>
    </location>
    <ligand>
        <name>UDP-N-acetyl-alpha-D-glucosamine</name>
        <dbReference type="ChEBI" id="CHEBI:57705"/>
    </ligand>
</feature>
<feature type="binding site" evidence="1">
    <location>
        <position position="376"/>
    </location>
    <ligand>
        <name>UDP-N-acetyl-alpha-D-glucosamine</name>
        <dbReference type="ChEBI" id="CHEBI:57705"/>
    </ligand>
</feature>
<feature type="binding site" evidence="1">
    <location>
        <position position="379"/>
    </location>
    <ligand>
        <name>acetyl-CoA</name>
        <dbReference type="ChEBI" id="CHEBI:57288"/>
    </ligand>
</feature>
<feature type="binding site" evidence="1">
    <location>
        <begin position="385"/>
        <end position="386"/>
    </location>
    <ligand>
        <name>acetyl-CoA</name>
        <dbReference type="ChEBI" id="CHEBI:57288"/>
    </ligand>
</feature>
<feature type="binding site" evidence="1">
    <location>
        <position position="404"/>
    </location>
    <ligand>
        <name>acetyl-CoA</name>
        <dbReference type="ChEBI" id="CHEBI:57288"/>
    </ligand>
</feature>
<feature type="binding site" evidence="1">
    <location>
        <position position="422"/>
    </location>
    <ligand>
        <name>acetyl-CoA</name>
        <dbReference type="ChEBI" id="CHEBI:57288"/>
    </ligand>
</feature>
<feature type="binding site" evidence="1">
    <location>
        <position position="439"/>
    </location>
    <ligand>
        <name>acetyl-CoA</name>
        <dbReference type="ChEBI" id="CHEBI:57288"/>
    </ligand>
</feature>
<comment type="function">
    <text evidence="1">Catalyzes the last two sequential reactions in the de novo biosynthetic pathway for UDP-N-acetylglucosamine (UDP-GlcNAc). The C-terminal domain catalyzes the transfer of acetyl group from acetyl coenzyme A to glucosamine-1-phosphate (GlcN-1-P) to produce N-acetylglucosamine-1-phosphate (GlcNAc-1-P), which is converted into UDP-GlcNAc by the transfer of uridine 5-monophosphate (from uridine 5-triphosphate), a reaction catalyzed by the N-terminal domain.</text>
</comment>
<comment type="catalytic activity">
    <reaction evidence="1">
        <text>alpha-D-glucosamine 1-phosphate + acetyl-CoA = N-acetyl-alpha-D-glucosamine 1-phosphate + CoA + H(+)</text>
        <dbReference type="Rhea" id="RHEA:13725"/>
        <dbReference type="ChEBI" id="CHEBI:15378"/>
        <dbReference type="ChEBI" id="CHEBI:57287"/>
        <dbReference type="ChEBI" id="CHEBI:57288"/>
        <dbReference type="ChEBI" id="CHEBI:57776"/>
        <dbReference type="ChEBI" id="CHEBI:58516"/>
        <dbReference type="EC" id="2.3.1.157"/>
    </reaction>
</comment>
<comment type="catalytic activity">
    <reaction evidence="1">
        <text>N-acetyl-alpha-D-glucosamine 1-phosphate + UTP + H(+) = UDP-N-acetyl-alpha-D-glucosamine + diphosphate</text>
        <dbReference type="Rhea" id="RHEA:13509"/>
        <dbReference type="ChEBI" id="CHEBI:15378"/>
        <dbReference type="ChEBI" id="CHEBI:33019"/>
        <dbReference type="ChEBI" id="CHEBI:46398"/>
        <dbReference type="ChEBI" id="CHEBI:57705"/>
        <dbReference type="ChEBI" id="CHEBI:57776"/>
        <dbReference type="EC" id="2.7.7.23"/>
    </reaction>
</comment>
<comment type="cofactor">
    <cofactor evidence="1">
        <name>Mg(2+)</name>
        <dbReference type="ChEBI" id="CHEBI:18420"/>
    </cofactor>
    <text evidence="1">Binds 1 Mg(2+) ion per subunit.</text>
</comment>
<comment type="pathway">
    <text evidence="1">Nucleotide-sugar biosynthesis; UDP-N-acetyl-alpha-D-glucosamine biosynthesis; N-acetyl-alpha-D-glucosamine 1-phosphate from alpha-D-glucosamine 6-phosphate (route II): step 2/2.</text>
</comment>
<comment type="pathway">
    <text evidence="1">Nucleotide-sugar biosynthesis; UDP-N-acetyl-alpha-D-glucosamine biosynthesis; UDP-N-acetyl-alpha-D-glucosamine from N-acetyl-alpha-D-glucosamine 1-phosphate: step 1/1.</text>
</comment>
<comment type="pathway">
    <text evidence="1">Bacterial outer membrane biogenesis; LPS lipid A biosynthesis.</text>
</comment>
<comment type="subunit">
    <text evidence="1">Homotrimer.</text>
</comment>
<comment type="subcellular location">
    <subcellularLocation>
        <location evidence="1">Cytoplasm</location>
    </subcellularLocation>
</comment>
<comment type="similarity">
    <text evidence="1">In the N-terminal section; belongs to the N-acetylglucosamine-1-phosphate uridyltransferase family.</text>
</comment>
<comment type="similarity">
    <text evidence="1">In the C-terminal section; belongs to the transferase hexapeptide repeat family.</text>
</comment>
<dbReference type="EC" id="2.7.7.23" evidence="1"/>
<dbReference type="EC" id="2.3.1.157" evidence="1"/>
<dbReference type="EMBL" id="AE014074">
    <property type="protein sequence ID" value="AAM78919.1"/>
    <property type="molecule type" value="Genomic_DNA"/>
</dbReference>
<dbReference type="RefSeq" id="WP_011054236.1">
    <property type="nucleotide sequence ID" value="NC_004070.1"/>
</dbReference>
<dbReference type="SMR" id="P0DB62"/>
<dbReference type="KEGG" id="spg:SpyM3_0312"/>
<dbReference type="HOGENOM" id="CLU_029499_15_2_9"/>
<dbReference type="UniPathway" id="UPA00113">
    <property type="reaction ID" value="UER00532"/>
</dbReference>
<dbReference type="UniPathway" id="UPA00113">
    <property type="reaction ID" value="UER00533"/>
</dbReference>
<dbReference type="UniPathway" id="UPA00973"/>
<dbReference type="Proteomes" id="UP000000564">
    <property type="component" value="Chromosome"/>
</dbReference>
<dbReference type="GO" id="GO:0005737">
    <property type="term" value="C:cytoplasm"/>
    <property type="evidence" value="ECO:0007669"/>
    <property type="project" value="UniProtKB-SubCell"/>
</dbReference>
<dbReference type="GO" id="GO:0016020">
    <property type="term" value="C:membrane"/>
    <property type="evidence" value="ECO:0007669"/>
    <property type="project" value="GOC"/>
</dbReference>
<dbReference type="GO" id="GO:0019134">
    <property type="term" value="F:glucosamine-1-phosphate N-acetyltransferase activity"/>
    <property type="evidence" value="ECO:0007669"/>
    <property type="project" value="UniProtKB-UniRule"/>
</dbReference>
<dbReference type="GO" id="GO:0000287">
    <property type="term" value="F:magnesium ion binding"/>
    <property type="evidence" value="ECO:0007669"/>
    <property type="project" value="UniProtKB-UniRule"/>
</dbReference>
<dbReference type="GO" id="GO:0003977">
    <property type="term" value="F:UDP-N-acetylglucosamine diphosphorylase activity"/>
    <property type="evidence" value="ECO:0007669"/>
    <property type="project" value="UniProtKB-UniRule"/>
</dbReference>
<dbReference type="GO" id="GO:0000902">
    <property type="term" value="P:cell morphogenesis"/>
    <property type="evidence" value="ECO:0007669"/>
    <property type="project" value="UniProtKB-UniRule"/>
</dbReference>
<dbReference type="GO" id="GO:0071555">
    <property type="term" value="P:cell wall organization"/>
    <property type="evidence" value="ECO:0007669"/>
    <property type="project" value="UniProtKB-KW"/>
</dbReference>
<dbReference type="GO" id="GO:0009245">
    <property type="term" value="P:lipid A biosynthetic process"/>
    <property type="evidence" value="ECO:0007669"/>
    <property type="project" value="UniProtKB-UniRule"/>
</dbReference>
<dbReference type="GO" id="GO:0009252">
    <property type="term" value="P:peptidoglycan biosynthetic process"/>
    <property type="evidence" value="ECO:0007669"/>
    <property type="project" value="UniProtKB-UniRule"/>
</dbReference>
<dbReference type="GO" id="GO:0008360">
    <property type="term" value="P:regulation of cell shape"/>
    <property type="evidence" value="ECO:0007669"/>
    <property type="project" value="UniProtKB-KW"/>
</dbReference>
<dbReference type="GO" id="GO:0006048">
    <property type="term" value="P:UDP-N-acetylglucosamine biosynthetic process"/>
    <property type="evidence" value="ECO:0007669"/>
    <property type="project" value="UniProtKB-UniPathway"/>
</dbReference>
<dbReference type="CDD" id="cd02540">
    <property type="entry name" value="GT2_GlmU_N_bac"/>
    <property type="match status" value="1"/>
</dbReference>
<dbReference type="CDD" id="cd03353">
    <property type="entry name" value="LbH_GlmU_C"/>
    <property type="match status" value="1"/>
</dbReference>
<dbReference type="Gene3D" id="2.160.10.10">
    <property type="entry name" value="Hexapeptide repeat proteins"/>
    <property type="match status" value="1"/>
</dbReference>
<dbReference type="Gene3D" id="3.90.550.10">
    <property type="entry name" value="Spore Coat Polysaccharide Biosynthesis Protein SpsA, Chain A"/>
    <property type="match status" value="1"/>
</dbReference>
<dbReference type="HAMAP" id="MF_01631">
    <property type="entry name" value="GlmU"/>
    <property type="match status" value="1"/>
</dbReference>
<dbReference type="InterPro" id="IPR005882">
    <property type="entry name" value="Bifunctional_GlmU"/>
</dbReference>
<dbReference type="InterPro" id="IPR050065">
    <property type="entry name" value="GlmU-like"/>
</dbReference>
<dbReference type="InterPro" id="IPR038009">
    <property type="entry name" value="GlmU_C_LbH"/>
</dbReference>
<dbReference type="InterPro" id="IPR001451">
    <property type="entry name" value="Hexapep"/>
</dbReference>
<dbReference type="InterPro" id="IPR005835">
    <property type="entry name" value="NTP_transferase_dom"/>
</dbReference>
<dbReference type="InterPro" id="IPR029044">
    <property type="entry name" value="Nucleotide-diphossugar_trans"/>
</dbReference>
<dbReference type="InterPro" id="IPR011004">
    <property type="entry name" value="Trimer_LpxA-like_sf"/>
</dbReference>
<dbReference type="NCBIfam" id="TIGR01173">
    <property type="entry name" value="glmU"/>
    <property type="match status" value="1"/>
</dbReference>
<dbReference type="NCBIfam" id="NF010934">
    <property type="entry name" value="PRK14354.1"/>
    <property type="match status" value="1"/>
</dbReference>
<dbReference type="PANTHER" id="PTHR43584:SF3">
    <property type="entry name" value="BIFUNCTIONAL PROTEIN GLMU"/>
    <property type="match status" value="1"/>
</dbReference>
<dbReference type="PANTHER" id="PTHR43584">
    <property type="entry name" value="NUCLEOTIDYL TRANSFERASE"/>
    <property type="match status" value="1"/>
</dbReference>
<dbReference type="Pfam" id="PF00132">
    <property type="entry name" value="Hexapep"/>
    <property type="match status" value="1"/>
</dbReference>
<dbReference type="Pfam" id="PF00483">
    <property type="entry name" value="NTP_transferase"/>
    <property type="match status" value="1"/>
</dbReference>
<dbReference type="SUPFAM" id="SSF53448">
    <property type="entry name" value="Nucleotide-diphospho-sugar transferases"/>
    <property type="match status" value="1"/>
</dbReference>
<dbReference type="SUPFAM" id="SSF51161">
    <property type="entry name" value="Trimeric LpxA-like enzymes"/>
    <property type="match status" value="1"/>
</dbReference>
<protein>
    <recommendedName>
        <fullName evidence="1">Bifunctional protein GlmU</fullName>
    </recommendedName>
    <domain>
        <recommendedName>
            <fullName evidence="1">UDP-N-acetylglucosamine pyrophosphorylase</fullName>
            <ecNumber evidence="1">2.7.7.23</ecNumber>
        </recommendedName>
        <alternativeName>
            <fullName evidence="1">N-acetylglucosamine-1-phosphate uridyltransferase</fullName>
        </alternativeName>
    </domain>
    <domain>
        <recommendedName>
            <fullName evidence="1">Glucosamine-1-phosphate N-acetyltransferase</fullName>
            <ecNumber evidence="1">2.3.1.157</ecNumber>
        </recommendedName>
    </domain>
</protein>
<name>GLMU_STRP3</name>
<proteinExistence type="inferred from homology"/>
<sequence length="460" mass="49601">MTNYAIILAAGKGTRMTSDLPKVLHKVSGLTMLEHVFRSVKAINPEKAVTVIGHKSEMVRAVLADQSAFVHQTEQLGTGHAVMMAETQLEGLEGHTLVIAGDTPLITGESLKSLIDFHVNHKNVATILTATAPDPFGYGRIVRNKDGEVIKIVEQKDANEYEQQLKEINTGTYVFDNKRLFEALKCITTNNAQGEYYLTDVVAIFRANKEKVGAYILRDFNESLGVNDRVALATAETVMRQRITQKHMVNGVTFHNPETVYIESDVTIAPDVLIEGNVTLKGRTHIGSGTVLTNGTYIVDSEIGDNCVVTNSMIESSVLAAGVTVGPYAHLRPGTTLDREVHIGNFVEVKGSHIGEKTKAGHLTYIGNAQVGSSVNVGAGTITVNYDGQNKYETVVGDHAFIGSNSTLIAPLEIGDNALTAAGSTISKTVPADSIVIGRSRQVTKEGYAKRLAHHPSRSK</sequence>